<accession>P0C7Y6</accession>
<evidence type="ECO:0000250" key="1">
    <source>
        <dbReference type="UniProtKB" id="A9JX05"/>
    </source>
</evidence>
<evidence type="ECO:0000305" key="2"/>
<protein>
    <recommendedName>
        <fullName>Phenol-soluble modulin alpha 1 peptide</fullName>
    </recommendedName>
</protein>
<keyword id="KW-0204">Cytolysis</keyword>
<keyword id="KW-0843">Virulence</keyword>
<comment type="function">
    <text evidence="1">Peptide which can recruit, activate and subsequently lyse human neutrophils, thus eliminating the main cellular defense against infection.</text>
</comment>
<comment type="similarity">
    <text evidence="2">Belongs to the phenol-soluble modulin alpha peptides family.</text>
</comment>
<sequence>MGIIAGIIKVIKSLIEQFTGK</sequence>
<reference key="1">
    <citation type="journal article" date="2001" name="Lancet">
        <title>Whole genome sequencing of meticillin-resistant Staphylococcus aureus.</title>
        <authorList>
            <person name="Kuroda M."/>
            <person name="Ohta T."/>
            <person name="Uchiyama I."/>
            <person name="Baba T."/>
            <person name="Yuzawa H."/>
            <person name="Kobayashi I."/>
            <person name="Cui L."/>
            <person name="Oguchi A."/>
            <person name="Aoki K."/>
            <person name="Nagai Y."/>
            <person name="Lian J.-Q."/>
            <person name="Ito T."/>
            <person name="Kanamori M."/>
            <person name="Matsumaru H."/>
            <person name="Maruyama A."/>
            <person name="Murakami H."/>
            <person name="Hosoyama A."/>
            <person name="Mizutani-Ui Y."/>
            <person name="Takahashi N.K."/>
            <person name="Sawano T."/>
            <person name="Inoue R."/>
            <person name="Kaito C."/>
            <person name="Sekimizu K."/>
            <person name="Hirakawa H."/>
            <person name="Kuhara S."/>
            <person name="Goto S."/>
            <person name="Yabuzaki J."/>
            <person name="Kanehisa M."/>
            <person name="Yamashita A."/>
            <person name="Oshima K."/>
            <person name="Furuya K."/>
            <person name="Yoshino C."/>
            <person name="Shiba T."/>
            <person name="Hattori M."/>
            <person name="Ogasawara N."/>
            <person name="Hayashi H."/>
            <person name="Hiramatsu K."/>
        </authorList>
    </citation>
    <scope>NUCLEOTIDE SEQUENCE [LARGE SCALE GENOMIC DNA]</scope>
    <source>
        <strain>Mu50 / ATCC 700699</strain>
    </source>
</reference>
<feature type="peptide" id="PRO_0000345037" description="Phenol-soluble modulin alpha 1 peptide">
    <location>
        <begin position="1"/>
        <end position="21"/>
    </location>
</feature>
<proteinExistence type="inferred from homology"/>
<organism>
    <name type="scientific">Staphylococcus aureus (strain Mu50 / ATCC 700699)</name>
    <dbReference type="NCBI Taxonomy" id="158878"/>
    <lineage>
        <taxon>Bacteria</taxon>
        <taxon>Bacillati</taxon>
        <taxon>Bacillota</taxon>
        <taxon>Bacilli</taxon>
        <taxon>Bacillales</taxon>
        <taxon>Staphylococcaceae</taxon>
        <taxon>Staphylococcus</taxon>
    </lineage>
</organism>
<gene>
    <name type="primary">psmA1</name>
    <name type="ordered locus">SAV0451.4</name>
</gene>
<dbReference type="EMBL" id="BA000017">
    <property type="status" value="NOT_ANNOTATED_CDS"/>
    <property type="molecule type" value="Genomic_DNA"/>
</dbReference>
<dbReference type="SMR" id="P0C7Y6"/>
<dbReference type="Proteomes" id="UP000002481">
    <property type="component" value="Chromosome"/>
</dbReference>
<dbReference type="GO" id="GO:0031640">
    <property type="term" value="P:killing of cells of another organism"/>
    <property type="evidence" value="ECO:0007669"/>
    <property type="project" value="UniProtKB-KW"/>
</dbReference>
<dbReference type="InterPro" id="IPR031429">
    <property type="entry name" value="PSM_alpha"/>
</dbReference>
<dbReference type="NCBIfam" id="NF033425">
    <property type="entry name" value="PSM_alpha_1_2"/>
    <property type="match status" value="1"/>
</dbReference>
<dbReference type="Pfam" id="PF17063">
    <property type="entry name" value="PSMalpha"/>
    <property type="match status" value="1"/>
</dbReference>
<name>PSMA1_STAAM</name>